<name>OPRK_BOVIN</name>
<organism>
    <name type="scientific">Bos taurus</name>
    <name type="common">Bovine</name>
    <dbReference type="NCBI Taxonomy" id="9913"/>
    <lineage>
        <taxon>Eukaryota</taxon>
        <taxon>Metazoa</taxon>
        <taxon>Chordata</taxon>
        <taxon>Craniata</taxon>
        <taxon>Vertebrata</taxon>
        <taxon>Euteleostomi</taxon>
        <taxon>Mammalia</taxon>
        <taxon>Eutheria</taxon>
        <taxon>Laurasiatheria</taxon>
        <taxon>Artiodactyla</taxon>
        <taxon>Ruminantia</taxon>
        <taxon>Pecora</taxon>
        <taxon>Bovidae</taxon>
        <taxon>Bovinae</taxon>
        <taxon>Bos</taxon>
    </lineage>
</organism>
<dbReference type="EMBL" id="BC112561">
    <property type="protein sequence ID" value="AAI12562.1"/>
    <property type="molecule type" value="mRNA"/>
</dbReference>
<dbReference type="RefSeq" id="NP_001039945.1">
    <property type="nucleotide sequence ID" value="NM_001046480.3"/>
</dbReference>
<dbReference type="RefSeq" id="NP_001305693.1">
    <property type="nucleotide sequence ID" value="NM_001318764.1"/>
</dbReference>
<dbReference type="SMR" id="Q2KIP6"/>
<dbReference type="FunCoup" id="Q2KIP6">
    <property type="interactions" value="223"/>
</dbReference>
<dbReference type="STRING" id="9913.ENSBTAP00000001209"/>
<dbReference type="BindingDB" id="Q2KIP6"/>
<dbReference type="ChEMBL" id="CHEMBL5465308"/>
<dbReference type="GlyCosmos" id="Q2KIP6">
    <property type="glycosylation" value="2 sites, No reported glycans"/>
</dbReference>
<dbReference type="GlyGen" id="Q2KIP6">
    <property type="glycosylation" value="2 sites"/>
</dbReference>
<dbReference type="PaxDb" id="9913-ENSBTAP00000001209"/>
<dbReference type="Ensembl" id="ENSBTAT00000001209.5">
    <property type="protein sequence ID" value="ENSBTAP00000001209.3"/>
    <property type="gene ID" value="ENSBTAG00000000914.5"/>
</dbReference>
<dbReference type="GeneID" id="540519"/>
<dbReference type="KEGG" id="bta:540519"/>
<dbReference type="CTD" id="4986"/>
<dbReference type="VEuPathDB" id="HostDB:ENSBTAG00000000914"/>
<dbReference type="VGNC" id="VGNC:32439">
    <property type="gene designation" value="OPRK1"/>
</dbReference>
<dbReference type="eggNOG" id="KOG3656">
    <property type="taxonomic scope" value="Eukaryota"/>
</dbReference>
<dbReference type="GeneTree" id="ENSGT00940000157341"/>
<dbReference type="HOGENOM" id="CLU_009579_8_1_1"/>
<dbReference type="InParanoid" id="Q2KIP6"/>
<dbReference type="OMA" id="DTFMKIC"/>
<dbReference type="OrthoDB" id="6076970at2759"/>
<dbReference type="TreeFam" id="TF315737"/>
<dbReference type="Reactome" id="R-BTA-375276">
    <property type="pathway name" value="Peptide ligand-binding receptors"/>
</dbReference>
<dbReference type="Reactome" id="R-BTA-418594">
    <property type="pathway name" value="G alpha (i) signalling events"/>
</dbReference>
<dbReference type="Proteomes" id="UP000009136">
    <property type="component" value="Chromosome 14"/>
</dbReference>
<dbReference type="Bgee" id="ENSBTAG00000000914">
    <property type="expression patterns" value="Expressed in floor plate of diencephalon and 23 other cell types or tissues"/>
</dbReference>
<dbReference type="GO" id="GO:0016020">
    <property type="term" value="C:membrane"/>
    <property type="evidence" value="ECO:0000250"/>
    <property type="project" value="UniProtKB"/>
</dbReference>
<dbReference type="GO" id="GO:0043005">
    <property type="term" value="C:neuron projection"/>
    <property type="evidence" value="ECO:0000318"/>
    <property type="project" value="GO_Central"/>
</dbReference>
<dbReference type="GO" id="GO:0005886">
    <property type="term" value="C:plasma membrane"/>
    <property type="evidence" value="ECO:0000250"/>
    <property type="project" value="UniProtKB"/>
</dbReference>
<dbReference type="GO" id="GO:0038048">
    <property type="term" value="F:dynorphin receptor activity"/>
    <property type="evidence" value="ECO:0000250"/>
    <property type="project" value="UniProtKB"/>
</dbReference>
<dbReference type="GO" id="GO:0004985">
    <property type="term" value="F:G protein-coupled opioid receptor activity"/>
    <property type="evidence" value="ECO:0000250"/>
    <property type="project" value="UniProtKB"/>
</dbReference>
<dbReference type="GO" id="GO:0042923">
    <property type="term" value="F:neuropeptide binding"/>
    <property type="evidence" value="ECO:0000318"/>
    <property type="project" value="GO_Central"/>
</dbReference>
<dbReference type="GO" id="GO:0031635">
    <property type="term" value="P:adenylate cyclase-inhibiting opioid receptor signaling pathway"/>
    <property type="evidence" value="ECO:0000250"/>
    <property type="project" value="UniProtKB"/>
</dbReference>
<dbReference type="GO" id="GO:0038003">
    <property type="term" value="P:G protein-coupled opioid receptor signaling pathway"/>
    <property type="evidence" value="ECO:0000318"/>
    <property type="project" value="GO_Central"/>
</dbReference>
<dbReference type="GO" id="GO:0007626">
    <property type="term" value="P:locomotory behavior"/>
    <property type="evidence" value="ECO:0000250"/>
    <property type="project" value="UniProtKB"/>
</dbReference>
<dbReference type="GO" id="GO:0007218">
    <property type="term" value="P:neuropeptide signaling pathway"/>
    <property type="evidence" value="ECO:0000318"/>
    <property type="project" value="GO_Central"/>
</dbReference>
<dbReference type="GO" id="GO:0007200">
    <property type="term" value="P:phospholipase C-activating G protein-coupled receptor signaling pathway"/>
    <property type="evidence" value="ECO:0000250"/>
    <property type="project" value="UniProtKB"/>
</dbReference>
<dbReference type="GO" id="GO:0046877">
    <property type="term" value="P:regulation of saliva secretion"/>
    <property type="evidence" value="ECO:0000250"/>
    <property type="project" value="UniProtKB"/>
</dbReference>
<dbReference type="GO" id="GO:0019233">
    <property type="term" value="P:sensory perception of pain"/>
    <property type="evidence" value="ECO:0000250"/>
    <property type="project" value="UniProtKB"/>
</dbReference>
<dbReference type="CDD" id="cd15091">
    <property type="entry name" value="7tmA_Kappa_opioid_R"/>
    <property type="match status" value="1"/>
</dbReference>
<dbReference type="FunFam" id="1.20.1070.10:FF:000014">
    <property type="entry name" value="Kappa-type opioid receptor 1"/>
    <property type="match status" value="1"/>
</dbReference>
<dbReference type="Gene3D" id="1.20.1070.10">
    <property type="entry name" value="Rhodopsin 7-helix transmembrane proteins"/>
    <property type="match status" value="1"/>
</dbReference>
<dbReference type="InterPro" id="IPR000276">
    <property type="entry name" value="GPCR_Rhodpsn"/>
</dbReference>
<dbReference type="InterPro" id="IPR017452">
    <property type="entry name" value="GPCR_Rhodpsn_7TM"/>
</dbReference>
<dbReference type="InterPro" id="IPR000452">
    <property type="entry name" value="Kappa_opi_rcpt"/>
</dbReference>
<dbReference type="InterPro" id="IPR001418">
    <property type="entry name" value="Opioid_rcpt"/>
</dbReference>
<dbReference type="PANTHER" id="PTHR24229:SF1">
    <property type="entry name" value="KAPPA-TYPE OPIOID RECEPTOR"/>
    <property type="match status" value="1"/>
</dbReference>
<dbReference type="PANTHER" id="PTHR24229">
    <property type="entry name" value="NEUROPEPTIDES RECEPTOR"/>
    <property type="match status" value="1"/>
</dbReference>
<dbReference type="Pfam" id="PF00001">
    <property type="entry name" value="7tm_1"/>
    <property type="match status" value="1"/>
</dbReference>
<dbReference type="PRINTS" id="PR00237">
    <property type="entry name" value="GPCRRHODOPSN"/>
</dbReference>
<dbReference type="PRINTS" id="PR00532">
    <property type="entry name" value="KAPPAOPIOIDR"/>
</dbReference>
<dbReference type="PRINTS" id="PR00384">
    <property type="entry name" value="OPIOIDR"/>
</dbReference>
<dbReference type="SMART" id="SM01381">
    <property type="entry name" value="7TM_GPCR_Srsx"/>
    <property type="match status" value="1"/>
</dbReference>
<dbReference type="SUPFAM" id="SSF81321">
    <property type="entry name" value="Family A G protein-coupled receptor-like"/>
    <property type="match status" value="1"/>
</dbReference>
<dbReference type="PROSITE" id="PS00237">
    <property type="entry name" value="G_PROTEIN_RECEP_F1_1"/>
    <property type="match status" value="1"/>
</dbReference>
<dbReference type="PROSITE" id="PS50262">
    <property type="entry name" value="G_PROTEIN_RECEP_F1_2"/>
    <property type="match status" value="1"/>
</dbReference>
<gene>
    <name type="primary">OPRK1</name>
</gene>
<sequence length="380" mass="42626">MEPPVQIFRGEPGPTCSPSTCLPPNGSGWFPGWAEPDGNGSAGSEDVLLEPAHISPVILVIITAVYSVVFVVGLVGNSLVMFVIIRYTKMKTATNIYIFNLALADALVTTTMPFQSTVYLMNSWPFGDVLCKVVISIDYYNMFTSIFTLTMMSVDRYIAVCHPVKALDFRTPLKAKIINICIWILSSSVGISAIVLGGTKVREDMEVIECSLQFPDDDYSWWDLFMKVCVFVFAFVIPVLIIIVCYTLMILRLKSVRLLSGSREKDRNLRRITRLVLVVVAVFVVCWTPIHIFILVEALGSTAHSTAALSSYYFCIALGYTNSSLNPILYAFLDENFKRCFRDFCFPIKMRMERQSTSRVRNTVQDPAYVREVDGVNKPV</sequence>
<accession>Q2KIP6</accession>
<reference key="1">
    <citation type="submission" date="2006-01" db="EMBL/GenBank/DDBJ databases">
        <authorList>
            <consortium name="NIH - Mammalian Gene Collection (MGC) project"/>
        </authorList>
    </citation>
    <scope>NUCLEOTIDE SEQUENCE [LARGE SCALE MRNA]</scope>
    <source>
        <strain>Hereford</strain>
        <tissue>Testis</tissue>
    </source>
</reference>
<evidence type="ECO:0000250" key="1"/>
<evidence type="ECO:0000255" key="2"/>
<evidence type="ECO:0000255" key="3">
    <source>
        <dbReference type="PROSITE-ProRule" id="PRU00521"/>
    </source>
</evidence>
<protein>
    <recommendedName>
        <fullName>Kappa-type opioid receptor</fullName>
        <shortName>K-OR-1</shortName>
        <shortName>KOR-1</shortName>
    </recommendedName>
</protein>
<keyword id="KW-0085">Behavior</keyword>
<keyword id="KW-1003">Cell membrane</keyword>
<keyword id="KW-1015">Disulfide bond</keyword>
<keyword id="KW-0297">G-protein coupled receptor</keyword>
<keyword id="KW-0325">Glycoprotein</keyword>
<keyword id="KW-0449">Lipoprotein</keyword>
<keyword id="KW-0472">Membrane</keyword>
<keyword id="KW-0564">Palmitate</keyword>
<keyword id="KW-0675">Receptor</keyword>
<keyword id="KW-1185">Reference proteome</keyword>
<keyword id="KW-0807">Transducer</keyword>
<keyword id="KW-0812">Transmembrane</keyword>
<keyword id="KW-1133">Transmembrane helix</keyword>
<feature type="chain" id="PRO_0000244881" description="Kappa-type opioid receptor">
    <location>
        <begin position="1"/>
        <end position="380"/>
    </location>
</feature>
<feature type="topological domain" description="Extracellular" evidence="1">
    <location>
        <begin position="1"/>
        <end position="57"/>
    </location>
</feature>
<feature type="transmembrane region" description="Helical; Name=1" evidence="1">
    <location>
        <begin position="58"/>
        <end position="85"/>
    </location>
</feature>
<feature type="topological domain" description="Cytoplasmic" evidence="1">
    <location>
        <begin position="86"/>
        <end position="95"/>
    </location>
</feature>
<feature type="transmembrane region" description="Helical; Name=2" evidence="1">
    <location>
        <begin position="96"/>
        <end position="119"/>
    </location>
</feature>
<feature type="topological domain" description="Extracellular" evidence="1">
    <location>
        <begin position="120"/>
        <end position="132"/>
    </location>
</feature>
<feature type="transmembrane region" description="Helical; Name=3" evidence="1">
    <location>
        <begin position="133"/>
        <end position="154"/>
    </location>
</feature>
<feature type="topological domain" description="Cytoplasmic" evidence="1">
    <location>
        <begin position="155"/>
        <end position="173"/>
    </location>
</feature>
<feature type="transmembrane region" description="Helical; Name=4" evidence="1">
    <location>
        <begin position="174"/>
        <end position="196"/>
    </location>
</feature>
<feature type="topological domain" description="Extracellular" evidence="1">
    <location>
        <begin position="197"/>
        <end position="222"/>
    </location>
</feature>
<feature type="transmembrane region" description="Helical; Name=5" evidence="1">
    <location>
        <begin position="223"/>
        <end position="247"/>
    </location>
</feature>
<feature type="topological domain" description="Cytoplasmic" evidence="1">
    <location>
        <begin position="248"/>
        <end position="274"/>
    </location>
</feature>
<feature type="transmembrane region" description="Helical; Name=6" evidence="1">
    <location>
        <begin position="275"/>
        <end position="296"/>
    </location>
</feature>
<feature type="topological domain" description="Extracellular" evidence="1">
    <location>
        <begin position="297"/>
        <end position="311"/>
    </location>
</feature>
<feature type="transmembrane region" description="Helical; Name=7" evidence="1">
    <location>
        <begin position="312"/>
        <end position="333"/>
    </location>
</feature>
<feature type="topological domain" description="Cytoplasmic" evidence="1">
    <location>
        <begin position="334"/>
        <end position="380"/>
    </location>
</feature>
<feature type="lipid moiety-binding region" description="S-palmitoyl cysteine" evidence="2">
    <location>
        <position position="345"/>
    </location>
</feature>
<feature type="glycosylation site" description="N-linked (GlcNAc...) asparagine" evidence="1">
    <location>
        <position position="25"/>
    </location>
</feature>
<feature type="glycosylation site" description="N-linked (GlcNAc...) asparagine" evidence="1">
    <location>
        <position position="39"/>
    </location>
</feature>
<feature type="disulfide bond" evidence="3">
    <location>
        <begin position="131"/>
        <end position="210"/>
    </location>
</feature>
<comment type="function">
    <text evidence="1">G-protein coupled opioid receptor that functions as a receptor for endogenous alpha-neoendorphins and dynorphins, but has low affinity for beta-endorphins. Also functions as a receptor for various synthetic opioids and for the psychoactive diterpene salvinorin A. Ligand binding causes a conformation change that triggers signaling via guanine nucleotide-binding proteins (G proteins) and modulates the activity of down-stream effectors, such as adenylate cyclase. Signaling leads to the inhibition of adenylate cyclase activity. Inhibits neurotransmitter release by reducing calcium ion currents and increasing potassium ion conductance. Plays a role in the perception of pain. Plays a role in mediating reduced physical activity upon treatment with synthetic opioids. Plays a role in the regulation of salivation in response to synthetic opioids. May play a role in arousal and regulation of autonomic and neuroendocrine functions (By similarity).</text>
</comment>
<comment type="subunit">
    <text evidence="1">Interacts with NHERF1. Interacts with GABARAPL1 (By similarity).</text>
</comment>
<comment type="subcellular location">
    <subcellularLocation>
        <location evidence="1">Cell membrane</location>
        <topology evidence="1">Multi-pass membrane protein</topology>
    </subcellularLocation>
</comment>
<comment type="similarity">
    <text evidence="3">Belongs to the G-protein coupled receptor 1 family.</text>
</comment>
<proteinExistence type="evidence at transcript level"/>